<name>MKRN3_HUMAN</name>
<dbReference type="EC" id="2.3.2.27" evidence="13 14"/>
<dbReference type="EMBL" id="U19107">
    <property type="protein sequence ID" value="AAC13989.1"/>
    <property type="molecule type" value="Genomic_DNA"/>
</dbReference>
<dbReference type="EMBL" id="BC044639">
    <property type="protein sequence ID" value="AAH44639.1"/>
    <property type="molecule type" value="mRNA"/>
</dbReference>
<dbReference type="CCDS" id="CCDS10013.1"/>
<dbReference type="PIR" id="G01614">
    <property type="entry name" value="G01614"/>
</dbReference>
<dbReference type="RefSeq" id="NP_005655.1">
    <property type="nucleotide sequence ID" value="NM_005664.4"/>
</dbReference>
<dbReference type="BioGRID" id="113479">
    <property type="interactions" value="219"/>
</dbReference>
<dbReference type="FunCoup" id="Q13064">
    <property type="interactions" value="54"/>
</dbReference>
<dbReference type="IntAct" id="Q13064">
    <property type="interactions" value="190"/>
</dbReference>
<dbReference type="MINT" id="Q13064"/>
<dbReference type="STRING" id="9606.ENSP00000313881"/>
<dbReference type="MoonDB" id="Q13064">
    <property type="type" value="Predicted"/>
</dbReference>
<dbReference type="iPTMnet" id="Q13064"/>
<dbReference type="PhosphoSitePlus" id="Q13064"/>
<dbReference type="BioMuta" id="MKRN3"/>
<dbReference type="DMDM" id="17368438"/>
<dbReference type="jPOST" id="Q13064"/>
<dbReference type="MassIVE" id="Q13064"/>
<dbReference type="PaxDb" id="9606-ENSP00000313881"/>
<dbReference type="PeptideAtlas" id="Q13064"/>
<dbReference type="ProteomicsDB" id="59127"/>
<dbReference type="Antibodypedia" id="22273">
    <property type="antibodies" value="88 antibodies from 19 providers"/>
</dbReference>
<dbReference type="DNASU" id="7681"/>
<dbReference type="Ensembl" id="ENST00000314520.6">
    <property type="protein sequence ID" value="ENSP00000313881.3"/>
    <property type="gene ID" value="ENSG00000179455.10"/>
</dbReference>
<dbReference type="GeneID" id="7681"/>
<dbReference type="KEGG" id="hsa:7681"/>
<dbReference type="MANE-Select" id="ENST00000314520.6">
    <property type="protein sequence ID" value="ENSP00000313881.3"/>
    <property type="RefSeq nucleotide sequence ID" value="NM_005664.4"/>
    <property type="RefSeq protein sequence ID" value="NP_005655.1"/>
</dbReference>
<dbReference type="UCSC" id="uc001ywh.5">
    <property type="organism name" value="human"/>
</dbReference>
<dbReference type="AGR" id="HGNC:7114"/>
<dbReference type="CTD" id="7681"/>
<dbReference type="DisGeNET" id="7681"/>
<dbReference type="GeneCards" id="MKRN3"/>
<dbReference type="GeneReviews" id="MKRN3"/>
<dbReference type="HGNC" id="HGNC:7114">
    <property type="gene designation" value="MKRN3"/>
</dbReference>
<dbReference type="HPA" id="ENSG00000179455">
    <property type="expression patterns" value="Tissue enhanced (retina)"/>
</dbReference>
<dbReference type="MalaCards" id="MKRN3"/>
<dbReference type="MIM" id="603856">
    <property type="type" value="gene"/>
</dbReference>
<dbReference type="MIM" id="615346">
    <property type="type" value="phenotype"/>
</dbReference>
<dbReference type="neXtProt" id="NX_Q13064"/>
<dbReference type="OpenTargets" id="ENSG00000179455"/>
<dbReference type="Orphanet" id="650077">
    <property type="disease" value="Genetic central precocious puberty in female"/>
</dbReference>
<dbReference type="Orphanet" id="650097">
    <property type="disease" value="Genetic central precocious puberty in male"/>
</dbReference>
<dbReference type="PharmGKB" id="PA30833"/>
<dbReference type="VEuPathDB" id="HostDB:ENSG00000179455"/>
<dbReference type="eggNOG" id="KOG1039">
    <property type="taxonomic scope" value="Eukaryota"/>
</dbReference>
<dbReference type="GeneTree" id="ENSGT00950000183077"/>
<dbReference type="HOGENOM" id="CLU_040815_4_1_1"/>
<dbReference type="InParanoid" id="Q13064"/>
<dbReference type="OMA" id="NKTCRYF"/>
<dbReference type="OrthoDB" id="411372at2759"/>
<dbReference type="PAN-GO" id="Q13064">
    <property type="GO annotations" value="2 GO annotations based on evolutionary models"/>
</dbReference>
<dbReference type="PhylomeDB" id="Q13064"/>
<dbReference type="TreeFam" id="TF315108"/>
<dbReference type="PathwayCommons" id="Q13064"/>
<dbReference type="SignaLink" id="Q13064"/>
<dbReference type="SIGNOR" id="Q13064"/>
<dbReference type="UniPathway" id="UPA00143"/>
<dbReference type="BioGRID-ORCS" id="7681">
    <property type="hits" value="14 hits in 1190 CRISPR screens"/>
</dbReference>
<dbReference type="ChiTaRS" id="MKRN3">
    <property type="organism name" value="human"/>
</dbReference>
<dbReference type="GenomeRNAi" id="7681"/>
<dbReference type="Pharos" id="Q13064">
    <property type="development level" value="Tbio"/>
</dbReference>
<dbReference type="PRO" id="PR:Q13064"/>
<dbReference type="Proteomes" id="UP000005640">
    <property type="component" value="Chromosome 15"/>
</dbReference>
<dbReference type="RNAct" id="Q13064">
    <property type="molecule type" value="protein"/>
</dbReference>
<dbReference type="Bgee" id="ENSG00000179455">
    <property type="expression patterns" value="Expressed in ganglionic eminence and 111 other cell types or tissues"/>
</dbReference>
<dbReference type="ExpressionAtlas" id="Q13064">
    <property type="expression patterns" value="baseline and differential"/>
</dbReference>
<dbReference type="GO" id="GO:0005634">
    <property type="term" value="C:nucleus"/>
    <property type="evidence" value="ECO:0007669"/>
    <property type="project" value="UniProtKB-SubCell"/>
</dbReference>
<dbReference type="GO" id="GO:1990904">
    <property type="term" value="C:ribonucleoprotein complex"/>
    <property type="evidence" value="ECO:0000250"/>
    <property type="project" value="FlyBase"/>
</dbReference>
<dbReference type="GO" id="GO:0042802">
    <property type="term" value="F:identical protein binding"/>
    <property type="evidence" value="ECO:0000353"/>
    <property type="project" value="IntAct"/>
</dbReference>
<dbReference type="GO" id="GO:0003723">
    <property type="term" value="F:RNA binding"/>
    <property type="evidence" value="ECO:0000250"/>
    <property type="project" value="FlyBase"/>
</dbReference>
<dbReference type="GO" id="GO:0061630">
    <property type="term" value="F:ubiquitin protein ligase activity"/>
    <property type="evidence" value="ECO:0000250"/>
    <property type="project" value="FlyBase"/>
</dbReference>
<dbReference type="GO" id="GO:0008270">
    <property type="term" value="F:zinc ion binding"/>
    <property type="evidence" value="ECO:0007669"/>
    <property type="project" value="UniProtKB-KW"/>
</dbReference>
<dbReference type="GO" id="GO:0000209">
    <property type="term" value="P:protein polyubiquitination"/>
    <property type="evidence" value="ECO:0000250"/>
    <property type="project" value="FlyBase"/>
</dbReference>
<dbReference type="GO" id="GO:0016567">
    <property type="term" value="P:protein ubiquitination"/>
    <property type="evidence" value="ECO:0000318"/>
    <property type="project" value="GO_Central"/>
</dbReference>
<dbReference type="CDD" id="cd16730">
    <property type="entry name" value="RING-HC_MKRN1_3"/>
    <property type="match status" value="1"/>
</dbReference>
<dbReference type="FunFam" id="3.30.40.10:FF:000117">
    <property type="entry name" value="Probable E3 ubiquitin-protein ligase makorin-1"/>
    <property type="match status" value="1"/>
</dbReference>
<dbReference type="Gene3D" id="4.10.1000.10">
    <property type="entry name" value="Zinc finger, CCCH-type"/>
    <property type="match status" value="1"/>
</dbReference>
<dbReference type="Gene3D" id="3.30.40.10">
    <property type="entry name" value="Zinc/RING finger domain, C3HC4 (zinc finger)"/>
    <property type="match status" value="1"/>
</dbReference>
<dbReference type="InterPro" id="IPR045072">
    <property type="entry name" value="MKRN-like"/>
</dbReference>
<dbReference type="InterPro" id="IPR031644">
    <property type="entry name" value="MKRN1_C"/>
</dbReference>
<dbReference type="InterPro" id="IPR041367">
    <property type="entry name" value="Znf-CCCH_4"/>
</dbReference>
<dbReference type="InterPro" id="IPR018957">
    <property type="entry name" value="Znf_C3HC4_RING-type"/>
</dbReference>
<dbReference type="InterPro" id="IPR000571">
    <property type="entry name" value="Znf_CCCH"/>
</dbReference>
<dbReference type="InterPro" id="IPR036855">
    <property type="entry name" value="Znf_CCCH_sf"/>
</dbReference>
<dbReference type="InterPro" id="IPR001841">
    <property type="entry name" value="Znf_RING"/>
</dbReference>
<dbReference type="InterPro" id="IPR013083">
    <property type="entry name" value="Znf_RING/FYVE/PHD"/>
</dbReference>
<dbReference type="InterPro" id="IPR017907">
    <property type="entry name" value="Znf_RING_CS"/>
</dbReference>
<dbReference type="PANTHER" id="PTHR11224:SF38">
    <property type="entry name" value="E3 UBIQUITIN-PROTEIN LIGASE MAKORIN-3-RELATED"/>
    <property type="match status" value="1"/>
</dbReference>
<dbReference type="PANTHER" id="PTHR11224">
    <property type="entry name" value="MAKORIN-RELATED"/>
    <property type="match status" value="1"/>
</dbReference>
<dbReference type="Pfam" id="PF15815">
    <property type="entry name" value="MKRN1_C"/>
    <property type="match status" value="1"/>
</dbReference>
<dbReference type="Pfam" id="PF00097">
    <property type="entry name" value="zf-C3HC4"/>
    <property type="match status" value="1"/>
</dbReference>
<dbReference type="Pfam" id="PF14608">
    <property type="entry name" value="zf-CCCH_2"/>
    <property type="match status" value="2"/>
</dbReference>
<dbReference type="Pfam" id="PF18044">
    <property type="entry name" value="zf-CCCH_4"/>
    <property type="match status" value="1"/>
</dbReference>
<dbReference type="SMART" id="SM00184">
    <property type="entry name" value="RING"/>
    <property type="match status" value="1"/>
</dbReference>
<dbReference type="SMART" id="SM00356">
    <property type="entry name" value="ZnF_C3H1"/>
    <property type="match status" value="3"/>
</dbReference>
<dbReference type="SUPFAM" id="SSF90229">
    <property type="entry name" value="CCCH zinc finger"/>
    <property type="match status" value="1"/>
</dbReference>
<dbReference type="SUPFAM" id="SSF57850">
    <property type="entry name" value="RING/U-box"/>
    <property type="match status" value="1"/>
</dbReference>
<dbReference type="PROSITE" id="PS50103">
    <property type="entry name" value="ZF_C3H1"/>
    <property type="match status" value="3"/>
</dbReference>
<dbReference type="PROSITE" id="PS00518">
    <property type="entry name" value="ZF_RING_1"/>
    <property type="match status" value="1"/>
</dbReference>
<dbReference type="PROSITE" id="PS50089">
    <property type="entry name" value="ZF_RING_2"/>
    <property type="match status" value="1"/>
</dbReference>
<comment type="function">
    <text evidence="1 7 13 14">E3 ubiquitin ligase catalyzing the covalent attachment of ubiquitin moieties onto substrate proteins. Acts as a key developmental timer that helps ensure puberty begins at the appropriate age, by inhibiting premature activation of the reproductive hormone cascade. Epigenetically regulates GNRH1 transcription by disrupting the binding of methyl-DNA binding protein 3/MBD3 to the promoter of GNRH1. Mechanistically, mediates the non-proteolytic ubiquitination of MBD3 at multiple sites with 'Lys27' ubiquitin linkages and thereby regulates the methylation status of the genome, including GNRH1 promoter (PubMed:34692086). Modulates the stability and translation of GNRH1 mRNA by mediating the non-proteolytic ubiquitination of PABP family members PABPC1, PABPC3 and PABPC4 at multiple sites (PubMed:33744966). Also participates in the maintenance of genomic and epigenomic stability by regulating the abundance of APEX2 via 'Lys-48'-linked ubiquitination (PubMed:38705397).</text>
</comment>
<comment type="catalytic activity">
    <reaction evidence="13 14">
        <text>S-ubiquitinyl-[E2 ubiquitin-conjugating enzyme]-L-cysteine + [acceptor protein]-L-lysine = [E2 ubiquitin-conjugating enzyme]-L-cysteine + N(6)-ubiquitinyl-[acceptor protein]-L-lysine.</text>
        <dbReference type="EC" id="2.3.2.27"/>
    </reaction>
</comment>
<comment type="pathway">
    <text>Protein modification; protein ubiquitination.</text>
</comment>
<comment type="interaction">
    <interactant intactId="EBI-2340269">
        <id>Q13064</id>
    </interactant>
    <interactant intactId="EBI-17721098">
        <id>Q8WXI4-2</id>
        <label>ACOT11</label>
    </interactant>
    <organismsDiffer>false</organismsDiffer>
    <experiments>3</experiments>
</comment>
<comment type="interaction">
    <interactant intactId="EBI-2340269">
        <id>Q13064</id>
    </interactant>
    <interactant intactId="EBI-10173507">
        <id>Q6UY14-3</id>
        <label>ADAMTSL4</label>
    </interactant>
    <organismsDiffer>false</organismsDiffer>
    <experiments>3</experiments>
</comment>
<comment type="interaction">
    <interactant intactId="EBI-2340269">
        <id>Q13064</id>
    </interactant>
    <interactant intactId="EBI-12015266">
        <id>P18825</id>
        <label>ADRA2C</label>
    </interactant>
    <organismsDiffer>false</organismsDiffer>
    <experiments>3</experiments>
</comment>
<comment type="interaction">
    <interactant intactId="EBI-2340269">
        <id>Q13064</id>
    </interactant>
    <interactant intactId="EBI-17183751">
        <id>X5D778</id>
        <label>ANKRD11</label>
    </interactant>
    <organismsDiffer>false</organismsDiffer>
    <experiments>4</experiments>
</comment>
<comment type="interaction">
    <interactant intactId="EBI-2340269">
        <id>Q13064</id>
    </interactant>
    <interactant intactId="EBI-713602">
        <id>Q9BQD7</id>
        <label>ANTKMT</label>
    </interactant>
    <organismsDiffer>false</organismsDiffer>
    <experiments>3</experiments>
</comment>
<comment type="interaction">
    <interactant intactId="EBI-2340269">
        <id>Q13064</id>
    </interactant>
    <interactant intactId="EBI-21535880">
        <id>Q92870-2</id>
        <label>APBB2</label>
    </interactant>
    <organismsDiffer>false</organismsDiffer>
    <experiments>3</experiments>
</comment>
<comment type="interaction">
    <interactant intactId="EBI-2340269">
        <id>Q13064</id>
    </interactant>
    <interactant intactId="EBI-742588">
        <id>Q9UBZ4</id>
        <label>APEX2</label>
    </interactant>
    <organismsDiffer>false</organismsDiffer>
    <experiments>3</experiments>
</comment>
<comment type="interaction">
    <interactant intactId="EBI-2340269">
        <id>Q13064</id>
    </interactant>
    <interactant intactId="EBI-745213">
        <id>P29972</id>
        <label>AQP1</label>
    </interactant>
    <organismsDiffer>false</organismsDiffer>
    <experiments>3</experiments>
</comment>
<comment type="interaction">
    <interactant intactId="EBI-2340269">
        <id>Q13064</id>
    </interactant>
    <interactant intactId="EBI-948603">
        <id>Q03989</id>
        <label>ARID5A</label>
    </interactant>
    <organismsDiffer>false</organismsDiffer>
    <experiments>3</experiments>
</comment>
<comment type="interaction">
    <interactant intactId="EBI-2340269">
        <id>Q13064</id>
    </interactant>
    <interactant intactId="EBI-6425121">
        <id>Q96C12</id>
        <label>ARMC5</label>
    </interactant>
    <organismsDiffer>false</organismsDiffer>
    <experiments>3</experiments>
</comment>
<comment type="interaction">
    <interactant intactId="EBI-2340269">
        <id>Q13064</id>
    </interactant>
    <interactant intactId="EBI-745689">
        <id>Q7L5A3</id>
        <label>ATOSB</label>
    </interactant>
    <organismsDiffer>false</organismsDiffer>
    <experiments>3</experiments>
</comment>
<comment type="interaction">
    <interactant intactId="EBI-2340269">
        <id>Q13064</id>
    </interactant>
    <interactant intactId="EBI-946046">
        <id>P54252</id>
        <label>ATXN3</label>
    </interactant>
    <organismsDiffer>false</organismsDiffer>
    <experiments>3</experiments>
</comment>
<comment type="interaction">
    <interactant intactId="EBI-2340269">
        <id>Q13064</id>
    </interactant>
    <interactant intactId="EBI-8640233">
        <id>Q5T686</id>
        <label>AVPI1</label>
    </interactant>
    <organismsDiffer>false</organismsDiffer>
    <experiments>3</experiments>
</comment>
<comment type="interaction">
    <interactant intactId="EBI-2340269">
        <id>Q13064</id>
    </interactant>
    <interactant intactId="EBI-742695">
        <id>Q8N1L9</id>
        <label>BATF2</label>
    </interactant>
    <organismsDiffer>false</organismsDiffer>
    <experiments>3</experiments>
</comment>
<comment type="interaction">
    <interactant intactId="EBI-2340269">
        <id>Q13064</id>
    </interactant>
    <interactant intactId="EBI-526406">
        <id>O43521</id>
        <label>BCL2L11</label>
    </interactant>
    <organismsDiffer>false</organismsDiffer>
    <experiments>3</experiments>
</comment>
<comment type="interaction">
    <interactant intactId="EBI-2340269">
        <id>Q13064</id>
    </interactant>
    <interactant intactId="EBI-745073">
        <id>Q9BXY8</id>
        <label>BEX2</label>
    </interactant>
    <organismsDiffer>false</organismsDiffer>
    <experiments>6</experiments>
</comment>
<comment type="interaction">
    <interactant intactId="EBI-2340269">
        <id>Q13064</id>
    </interactant>
    <interactant intactId="EBI-2548012">
        <id>Q9H2G9</id>
        <label>BLZF1</label>
    </interactant>
    <organismsDiffer>false</organismsDiffer>
    <experiments>3</experiments>
</comment>
<comment type="interaction">
    <interactant intactId="EBI-2340269">
        <id>Q13064</id>
    </interactant>
    <interactant intactId="EBI-953896">
        <id>Q9NP55</id>
        <label>BPIFA1</label>
    </interactant>
    <organismsDiffer>false</organismsDiffer>
    <experiments>3</experiments>
</comment>
<comment type="interaction">
    <interactant intactId="EBI-2340269">
        <id>Q13064</id>
    </interactant>
    <interactant intactId="EBI-10226774">
        <id>Q0VAL7</id>
        <label>C21orf58</label>
    </interactant>
    <organismsDiffer>false</organismsDiffer>
    <experiments>3</experiments>
</comment>
<comment type="interaction">
    <interactant intactId="EBI-2340269">
        <id>Q13064</id>
    </interactant>
    <interactant intactId="EBI-744556">
        <id>Q96HB5</id>
        <label>CCDC120</label>
    </interactant>
    <organismsDiffer>false</organismsDiffer>
    <experiments>3</experiments>
</comment>
<comment type="interaction">
    <interactant intactId="EBI-2340269">
        <id>Q13064</id>
    </interactant>
    <interactant intactId="EBI-740814">
        <id>Q8N715</id>
        <label>CCDC185</label>
    </interactant>
    <organismsDiffer>false</organismsDiffer>
    <experiments>3</experiments>
</comment>
<comment type="interaction">
    <interactant intactId="EBI-2340269">
        <id>Q13064</id>
    </interactant>
    <interactant intactId="EBI-1773949">
        <id>Q9BXL8</id>
        <label>CDCA4</label>
    </interactant>
    <organismsDiffer>false</organismsDiffer>
    <experiments>3</experiments>
</comment>
<comment type="interaction">
    <interactant intactId="EBI-2340269">
        <id>Q13064</id>
    </interactant>
    <interactant intactId="EBI-739624">
        <id>Q8NHQ1</id>
        <label>CEP70</label>
    </interactant>
    <organismsDiffer>false</organismsDiffer>
    <experiments>3</experiments>
</comment>
<comment type="interaction">
    <interactant intactId="EBI-2340269">
        <id>Q13064</id>
    </interactant>
    <interactant intactId="EBI-12261896">
        <id>Q5T4B2</id>
        <label>CERCAM</label>
    </interactant>
    <organismsDiffer>false</organismsDiffer>
    <experiments>3</experiments>
</comment>
<comment type="interaction">
    <interactant intactId="EBI-2340269">
        <id>Q13064</id>
    </interactant>
    <interactant intactId="EBI-12010090">
        <id>A8MYP8</id>
        <label>CIMAP1B</label>
    </interactant>
    <organismsDiffer>false</organismsDiffer>
    <experiments>3</experiments>
</comment>
<comment type="interaction">
    <interactant intactId="EBI-2340269">
        <id>Q13064</id>
    </interactant>
    <interactant intactId="EBI-739773">
        <id>Q9BSW2</id>
        <label>CRACR2A</label>
    </interactant>
    <organismsDiffer>false</organismsDiffer>
    <experiments>3</experiments>
</comment>
<comment type="interaction">
    <interactant intactId="EBI-2340269">
        <id>Q13064</id>
    </interactant>
    <interactant intactId="EBI-3867333">
        <id>A8MQ03</id>
        <label>CYSRT1</label>
    </interactant>
    <organismsDiffer>false</organismsDiffer>
    <experiments>3</experiments>
</comment>
<comment type="interaction">
    <interactant intactId="EBI-2340269">
        <id>Q13064</id>
    </interactant>
    <interactant intactId="EBI-742054">
        <id>Q96D03</id>
        <label>DDIT4L</label>
    </interactant>
    <organismsDiffer>false</organismsDiffer>
    <experiments>3</experiments>
</comment>
<comment type="interaction">
    <interactant intactId="EBI-2340269">
        <id>Q13064</id>
    </interactant>
    <interactant intactId="EBI-947964">
        <id>Q16610</id>
        <label>ECM1</label>
    </interactant>
    <organismsDiffer>false</organismsDiffer>
    <experiments>3</experiments>
</comment>
<comment type="interaction">
    <interactant intactId="EBI-2340269">
        <id>Q13064</id>
    </interactant>
    <interactant intactId="EBI-712452">
        <id>Q9BQ95</id>
        <label>ECSIT</label>
    </interactant>
    <organismsDiffer>false</organismsDiffer>
    <experiments>3</experiments>
</comment>
<comment type="interaction">
    <interactant intactId="EBI-2340269">
        <id>Q13064</id>
    </interactant>
    <interactant intactId="EBI-536772">
        <id>Q12805</id>
        <label>EFEMP1</label>
    </interactant>
    <organismsDiffer>false</organismsDiffer>
    <experiments>3</experiments>
</comment>
<comment type="interaction">
    <interactant intactId="EBI-2340269">
        <id>Q13064</id>
    </interactant>
    <interactant intactId="EBI-744099">
        <id>Q9H0I2</id>
        <label>ENKD1</label>
    </interactant>
    <organismsDiffer>false</organismsDiffer>
    <experiments>4</experiments>
</comment>
<comment type="interaction">
    <interactant intactId="EBI-2340269">
        <id>Q13064</id>
    </interactant>
    <interactant intactId="EBI-750962">
        <id>P07992</id>
        <label>ERCC1</label>
    </interactant>
    <organismsDiffer>false</organismsDiffer>
    <experiments>3</experiments>
</comment>
<comment type="interaction">
    <interactant intactId="EBI-2340269">
        <id>Q13064</id>
    </interactant>
    <interactant intactId="EBI-1752811">
        <id>Q9BQ89</id>
        <label>FAM110A</label>
    </interactant>
    <organismsDiffer>false</organismsDiffer>
    <experiments>6</experiments>
</comment>
<comment type="interaction">
    <interactant intactId="EBI-2340269">
        <id>Q13064</id>
    </interactant>
    <interactant intactId="EBI-741626">
        <id>Q9H5Z6</id>
        <label>FAM124B</label>
    </interactant>
    <organismsDiffer>false</organismsDiffer>
    <experiments>3</experiments>
</comment>
<comment type="interaction">
    <interactant intactId="EBI-2340269">
        <id>Q13064</id>
    </interactant>
    <interactant intactId="EBI-2513774">
        <id>O95363</id>
        <label>FARS2</label>
    </interactant>
    <organismsDiffer>false</organismsDiffer>
    <experiments>3</experiments>
</comment>
<comment type="interaction">
    <interactant intactId="EBI-2340269">
        <id>Q13064</id>
    </interactant>
    <interactant intactId="EBI-372506">
        <id>Q8TAE8</id>
        <label>GADD45GIP1</label>
    </interactant>
    <organismsDiffer>false</organismsDiffer>
    <experiments>3</experiments>
</comment>
<comment type="interaction">
    <interactant intactId="EBI-2340269">
        <id>Q13064</id>
    </interactant>
    <interactant intactId="EBI-9090198">
        <id>P15976-2</id>
        <label>GATA1</label>
    </interactant>
    <organismsDiffer>false</organismsDiffer>
    <experiments>3</experiments>
</comment>
<comment type="interaction">
    <interactant intactId="EBI-2340269">
        <id>Q13064</id>
    </interactant>
    <interactant intactId="EBI-744104">
        <id>P55040</id>
        <label>GEM</label>
    </interactant>
    <organismsDiffer>false</organismsDiffer>
    <experiments>3</experiments>
</comment>
<comment type="interaction">
    <interactant intactId="EBI-2340269">
        <id>Q13064</id>
    </interactant>
    <interactant intactId="EBI-11163335">
        <id>Q9NYA3</id>
        <label>GOLGA6A</label>
    </interactant>
    <organismsDiffer>false</organismsDiffer>
    <experiments>3</experiments>
</comment>
<comment type="interaction">
    <interactant intactId="EBI-2340269">
        <id>Q13064</id>
    </interactant>
    <interactant intactId="EBI-9834454">
        <id>P08631-2</id>
        <label>HCK</label>
    </interactant>
    <organismsDiffer>false</organismsDiffer>
    <experiments>3</experiments>
</comment>
<comment type="interaction">
    <interactant intactId="EBI-2340269">
        <id>Q13064</id>
    </interactant>
    <interactant intactId="EBI-7133736">
        <id>P07686</id>
        <label>HEXB</label>
    </interactant>
    <organismsDiffer>false</organismsDiffer>
    <experiments>3</experiments>
</comment>
<comment type="interaction">
    <interactant intactId="EBI-2340269">
        <id>Q13064</id>
    </interactant>
    <interactant intactId="EBI-740220">
        <id>O14964</id>
        <label>HGS</label>
    </interactant>
    <organismsDiffer>false</organismsDiffer>
    <experiments>3</experiments>
</comment>
<comment type="interaction">
    <interactant intactId="EBI-2340269">
        <id>Q13064</id>
    </interactant>
    <interactant intactId="EBI-740785">
        <id>P49639</id>
        <label>HOXA1</label>
    </interactant>
    <organismsDiffer>false</organismsDiffer>
    <experiments>3</experiments>
</comment>
<comment type="interaction">
    <interactant intactId="EBI-2340269">
        <id>Q13064</id>
    </interactant>
    <interactant intactId="EBI-17244356">
        <id>P35452-2</id>
        <label>HOXD12</label>
    </interactant>
    <organismsDiffer>false</organismsDiffer>
    <experiments>3</experiments>
</comment>
<comment type="interaction">
    <interactant intactId="EBI-2340269">
        <id>Q13064</id>
    </interactant>
    <interactant intactId="EBI-7116203">
        <id>O75031</id>
        <label>HSF2BP</label>
    </interactant>
    <organismsDiffer>false</organismsDiffer>
    <experiments>3</experiments>
</comment>
<comment type="interaction">
    <interactant intactId="EBI-2340269">
        <id>Q13064</id>
    </interactant>
    <interactant intactId="EBI-12056251">
        <id>Q9ULV5-2</id>
        <label>HSF4</label>
    </interactant>
    <organismsDiffer>false</organismsDiffer>
    <experiments>3</experiments>
</comment>
<comment type="interaction">
    <interactant intactId="EBI-2340269">
        <id>Q13064</id>
    </interactant>
    <interactant intactId="EBI-12837046">
        <id>P05019-2</id>
        <label>IGF1</label>
    </interactant>
    <organismsDiffer>false</organismsDiffer>
    <experiments>3</experiments>
</comment>
<comment type="interaction">
    <interactant intactId="EBI-2340269">
        <id>Q13064</id>
    </interactant>
    <interactant intactId="EBI-747204">
        <id>Q9UKT9</id>
        <label>IKZF3</label>
    </interactant>
    <organismsDiffer>false</organismsDiffer>
    <experiments>3</experiments>
</comment>
<comment type="interaction">
    <interactant intactId="EBI-2340269">
        <id>Q13064</id>
    </interactant>
    <interactant intactId="EBI-715611">
        <id>Q9C086</id>
        <label>INO80B</label>
    </interactant>
    <organismsDiffer>false</organismsDiffer>
    <experiments>3</experiments>
</comment>
<comment type="interaction">
    <interactant intactId="EBI-2340269">
        <id>Q13064</id>
    </interactant>
    <interactant intactId="EBI-2556193">
        <id>Q63ZY3</id>
        <label>KANK2</label>
    </interactant>
    <organismsDiffer>false</organismsDiffer>
    <experiments>3</experiments>
</comment>
<comment type="interaction">
    <interactant intactId="EBI-2340269">
        <id>Q13064</id>
    </interactant>
    <interactant intactId="EBI-14069005">
        <id>Q9BVG8-5</id>
        <label>KIFC3</label>
    </interactant>
    <organismsDiffer>false</organismsDiffer>
    <experiments>3</experiments>
</comment>
<comment type="interaction">
    <interactant intactId="EBI-2340269">
        <id>Q13064</id>
    </interactant>
    <interactant intactId="EBI-8284732">
        <id>Q13351</id>
        <label>KLF1</label>
    </interactant>
    <organismsDiffer>false</organismsDiffer>
    <experiments>3</experiments>
</comment>
<comment type="interaction">
    <interactant intactId="EBI-2340269">
        <id>Q13064</id>
    </interactant>
    <interactant intactId="EBI-6426443">
        <id>Q2WGJ6</id>
        <label>KLHL38</label>
    </interactant>
    <organismsDiffer>false</organismsDiffer>
    <experiments>3</experiments>
</comment>
<comment type="interaction">
    <interactant intactId="EBI-2340269">
        <id>Q13064</id>
    </interactant>
    <interactant intactId="EBI-1047093">
        <id>O76011</id>
        <label>KRT34</label>
    </interactant>
    <organismsDiffer>false</organismsDiffer>
    <experiments>3</experiments>
</comment>
<comment type="interaction">
    <interactant intactId="EBI-2340269">
        <id>Q13064</id>
    </interactant>
    <interactant intactId="EBI-2949715">
        <id>O95678</id>
        <label>KRT75</label>
    </interactant>
    <organismsDiffer>false</organismsDiffer>
    <experiments>3</experiments>
</comment>
<comment type="interaction">
    <interactant intactId="EBI-2340269">
        <id>Q13064</id>
    </interactant>
    <interactant intactId="EBI-9996498">
        <id>O43790</id>
        <label>KRT86</label>
    </interactant>
    <organismsDiffer>false</organismsDiffer>
    <experiments>3</experiments>
</comment>
<comment type="interaction">
    <interactant intactId="EBI-2340269">
        <id>Q13064</id>
    </interactant>
    <interactant intactId="EBI-12196745">
        <id>Q3LHN2</id>
        <label>KRTAP19-2</label>
    </interactant>
    <organismsDiffer>false</organismsDiffer>
    <experiments>3</experiments>
</comment>
<comment type="interaction">
    <interactant intactId="EBI-2340269">
        <id>Q13064</id>
    </interactant>
    <interactant intactId="EBI-12805508">
        <id>Q3LI70</id>
        <label>KRTAP19-6</label>
    </interactant>
    <organismsDiffer>false</organismsDiffer>
    <experiments>3</experiments>
</comment>
<comment type="interaction">
    <interactant intactId="EBI-2340269">
        <id>Q13064</id>
    </interactant>
    <interactant intactId="EBI-10241353">
        <id>Q3SYF9</id>
        <label>KRTAP19-7</label>
    </interactant>
    <organismsDiffer>false</organismsDiffer>
    <experiments>3</experiments>
</comment>
<comment type="interaction">
    <interactant intactId="EBI-2340269">
        <id>Q13064</id>
    </interactant>
    <interactant intactId="EBI-18395721">
        <id>Q3LI59</id>
        <label>KRTAP21-2</label>
    </interactant>
    <organismsDiffer>false</organismsDiffer>
    <experiments>3</experiments>
</comment>
<comment type="interaction">
    <interactant intactId="EBI-2340269">
        <id>Q13064</id>
    </interactant>
    <interactant intactId="EBI-11962084">
        <id>Q3LI66</id>
        <label>KRTAP6-2</label>
    </interactant>
    <organismsDiffer>false</organismsDiffer>
    <experiments>3</experiments>
</comment>
<comment type="interaction">
    <interactant intactId="EBI-2340269">
        <id>Q13064</id>
    </interactant>
    <interactant intactId="EBI-18394498">
        <id>Q8IUC3</id>
        <label>KRTAP7-1</label>
    </interactant>
    <organismsDiffer>false</organismsDiffer>
    <experiments>3</experiments>
</comment>
<comment type="interaction">
    <interactant intactId="EBI-2340269">
        <id>Q13064</id>
    </interactant>
    <interactant intactId="EBI-10261141">
        <id>Q8IUC2</id>
        <label>KRTAP8-1</label>
    </interactant>
    <organismsDiffer>false</organismsDiffer>
    <experiments>3</experiments>
</comment>
<comment type="interaction">
    <interactant intactId="EBI-2340269">
        <id>Q13064</id>
    </interactant>
    <interactant intactId="EBI-1052105">
        <id>Q14657</id>
        <label>LAGE3</label>
    </interactant>
    <organismsDiffer>false</organismsDiffer>
    <experiments>3</experiments>
</comment>
<comment type="interaction">
    <interactant intactId="EBI-2340269">
        <id>Q13064</id>
    </interactant>
    <interactant intactId="EBI-9088686">
        <id>Q14847-2</id>
        <label>LASP1</label>
    </interactant>
    <organismsDiffer>false</organismsDiffer>
    <experiments>3</experiments>
</comment>
<comment type="interaction">
    <interactant intactId="EBI-2340269">
        <id>Q13064</id>
    </interactant>
    <interactant intactId="EBI-716006">
        <id>Q9Y5V3</id>
        <label>MAGED1</label>
    </interactant>
    <organismsDiffer>false</organismsDiffer>
    <experiments>3</experiments>
</comment>
<comment type="interaction">
    <interactant intactId="EBI-2340269">
        <id>Q13064</id>
    </interactant>
    <interactant intactId="EBI-11978579">
        <id>O95983-2</id>
        <label>MBD3</label>
    </interactant>
    <organismsDiffer>false</organismsDiffer>
    <experiments>3</experiments>
</comment>
<comment type="interaction">
    <interactant intactId="EBI-2340269">
        <id>Q13064</id>
    </interactant>
    <interactant intactId="EBI-11987923">
        <id>P59942</id>
        <label>MCCD1</label>
    </interactant>
    <organismsDiffer>false</organismsDiffer>
    <experiments>3</experiments>
</comment>
<comment type="interaction">
    <interactant intactId="EBI-2340269">
        <id>Q13064</id>
    </interactant>
    <interactant intactId="EBI-398437">
        <id>O15151</id>
        <label>MDM4</label>
    </interactant>
    <organismsDiffer>false</organismsDiffer>
    <experiments>9</experiments>
</comment>
<comment type="interaction">
    <interactant intactId="EBI-2340269">
        <id>Q13064</id>
    </interactant>
    <interactant intactId="EBI-2864512">
        <id>P50221</id>
        <label>MEOX1</label>
    </interactant>
    <organismsDiffer>false</organismsDiffer>
    <experiments>3</experiments>
</comment>
<comment type="interaction">
    <interactant intactId="EBI-2340269">
        <id>Q13064</id>
    </interactant>
    <interactant intactId="EBI-14086479">
        <id>Q8IVT4</id>
        <label>MGC50722</label>
    </interactant>
    <organismsDiffer>false</organismsDiffer>
    <experiments>3</experiments>
</comment>
<comment type="interaction">
    <interactant intactId="EBI-2340269">
        <id>Q13064</id>
    </interactant>
    <interactant intactId="EBI-9118295">
        <id>A9UHW6-2</id>
        <label>MIF4GD</label>
    </interactant>
    <organismsDiffer>false</organismsDiffer>
    <experiments>3</experiments>
</comment>
<comment type="interaction">
    <interactant intactId="EBI-2340269">
        <id>Q13064</id>
    </interactant>
    <interactant intactId="EBI-2340269">
        <id>Q13064</id>
        <label>MKRN3</label>
    </interactant>
    <organismsDiffer>false</organismsDiffer>
    <experiments>7</experiments>
</comment>
<comment type="interaction">
    <interactant intactId="EBI-2340269">
        <id>Q13064</id>
    </interactant>
    <interactant intactId="EBI-9675802">
        <id>Q6PF18</id>
        <label>MORN3</label>
    </interactant>
    <organismsDiffer>false</organismsDiffer>
    <experiments>3</experiments>
</comment>
<comment type="interaction">
    <interactant intactId="EBI-2340269">
        <id>Q13064</id>
    </interactant>
    <interactant intactId="EBI-720441">
        <id>Q96DV4</id>
        <label>MRPL38</label>
    </interactant>
    <organismsDiffer>false</organismsDiffer>
    <experiments>3</experiments>
</comment>
<comment type="interaction">
    <interactant intactId="EBI-2340269">
        <id>Q13064</id>
    </interactant>
    <interactant intactId="EBI-716172">
        <id>P82932</id>
        <label>MRPS6</label>
    </interactant>
    <organismsDiffer>false</organismsDiffer>
    <experiments>3</experiments>
</comment>
<comment type="interaction">
    <interactant intactId="EBI-2340269">
        <id>Q13064</id>
    </interactant>
    <interactant intactId="EBI-746712">
        <id>Q9NPC6</id>
        <label>MYOZ2</label>
    </interactant>
    <organismsDiffer>false</organismsDiffer>
    <experiments>3</experiments>
</comment>
<comment type="interaction">
    <interactant intactId="EBI-2340269">
        <id>Q13064</id>
    </interactant>
    <interactant intactId="EBI-2889252">
        <id>Q96AH0</id>
        <label>NABP1</label>
    </interactant>
    <organismsDiffer>false</organismsDiffer>
    <experiments>3</experiments>
</comment>
<comment type="interaction">
    <interactant intactId="EBI-2340269">
        <id>Q13064</id>
    </interactant>
    <interactant intactId="EBI-1246238">
        <id>P17568</id>
        <label>NDUFB7</label>
    </interactant>
    <organismsDiffer>false</organismsDiffer>
    <experiments>3</experiments>
</comment>
<comment type="interaction">
    <interactant intactId="EBI-2340269">
        <id>Q13064</id>
    </interactant>
    <interactant intactId="EBI-744871">
        <id>O00746</id>
        <label>NME4</label>
    </interactant>
    <organismsDiffer>false</organismsDiffer>
    <experiments>3</experiments>
</comment>
<comment type="interaction">
    <interactant intactId="EBI-2340269">
        <id>Q13064</id>
    </interactant>
    <interactant intactId="EBI-1046387">
        <id>Q96NG3</id>
        <label>ODAD4</label>
    </interactant>
    <organismsDiffer>false</organismsDiffer>
    <experiments>3</experiments>
</comment>
<comment type="interaction">
    <interactant intactId="EBI-2340269">
        <id>Q13064</id>
    </interactant>
    <interactant intactId="EBI-752057">
        <id>Q7Z412</id>
        <label>PEX26</label>
    </interactant>
    <organismsDiffer>false</organismsDiffer>
    <experiments>3</experiments>
</comment>
<comment type="interaction">
    <interactant intactId="EBI-2340269">
        <id>Q13064</id>
    </interactant>
    <interactant intactId="EBI-602382">
        <id>Q16512</id>
        <label>PKN1</label>
    </interactant>
    <organismsDiffer>false</organismsDiffer>
    <experiments>3</experiments>
</comment>
<comment type="interaction">
    <interactant intactId="EBI-2340269">
        <id>Q13064</id>
    </interactant>
    <interactant intactId="EBI-50433196">
        <id>A0A6Q8PF08</id>
        <label>PMP22</label>
    </interactant>
    <organismsDiffer>false</organismsDiffer>
    <experiments>3</experiments>
</comment>
<comment type="interaction">
    <interactant intactId="EBI-2340269">
        <id>Q13064</id>
    </interactant>
    <interactant intactId="EBI-1055079">
        <id>O15160</id>
        <label>POLR1C</label>
    </interactant>
    <organismsDiffer>false</organismsDiffer>
    <experiments>5</experiments>
</comment>
<comment type="interaction">
    <interactant intactId="EBI-2340269">
        <id>Q13064</id>
    </interactant>
    <interactant intactId="EBI-12219503">
        <id>P01189</id>
        <label>POMC</label>
    </interactant>
    <organismsDiffer>false</organismsDiffer>
    <experiments>3</experiments>
</comment>
<comment type="interaction">
    <interactant intactId="EBI-2340269">
        <id>Q13064</id>
    </interactant>
    <interactant intactId="EBI-1383852">
        <id>P54646</id>
        <label>PRKAA2</label>
    </interactant>
    <organismsDiffer>false</organismsDiffer>
    <experiments>3</experiments>
</comment>
<comment type="interaction">
    <interactant intactId="EBI-2340269">
        <id>Q13064</id>
    </interactant>
    <interactant intactId="EBI-1567797">
        <id>Q8WWY3</id>
        <label>PRPF31</label>
    </interactant>
    <organismsDiffer>false</organismsDiffer>
    <experiments>11</experiments>
</comment>
<comment type="interaction">
    <interactant intactId="EBI-2340269">
        <id>Q13064</id>
    </interactant>
    <interactant intactId="EBI-11986293">
        <id>P0CG20</id>
        <label>PRR35</label>
    </interactant>
    <organismsDiffer>false</organismsDiffer>
    <experiments>3</experiments>
</comment>
<comment type="interaction">
    <interactant intactId="EBI-2340269">
        <id>Q13064</id>
    </interactant>
    <interactant intactId="EBI-359352">
        <id>P25786</id>
        <label>PSMA1</label>
    </interactant>
    <organismsDiffer>false</organismsDiffer>
    <experiments>6</experiments>
</comment>
<comment type="interaction">
    <interactant intactId="EBI-2340269">
        <id>Q13064</id>
    </interactant>
    <interactant intactId="EBI-372273">
        <id>P20618</id>
        <label>PSMB1</label>
    </interactant>
    <organismsDiffer>false</organismsDiffer>
    <experiments>3</experiments>
</comment>
<comment type="interaction">
    <interactant intactId="EBI-2340269">
        <id>Q13064</id>
    </interactant>
    <interactant intactId="EBI-2860297">
        <id>Q03431</id>
        <label>PTH1R</label>
    </interactant>
    <organismsDiffer>false</organismsDiffer>
    <experiments>3</experiments>
</comment>
<comment type="interaction">
    <interactant intactId="EBI-2340269">
        <id>Q13064</id>
    </interactant>
    <interactant intactId="EBI-1383632">
        <id>Q13882</id>
        <label>PTK6</label>
    </interactant>
    <organismsDiffer>false</organismsDiffer>
    <experiments>3</experiments>
</comment>
<comment type="interaction">
    <interactant intactId="EBI-2340269">
        <id>Q13064</id>
    </interactant>
    <interactant intactId="EBI-740818">
        <id>Q9Y272</id>
        <label>RASD1</label>
    </interactant>
    <organismsDiffer>false</organismsDiffer>
    <experiments>3</experiments>
</comment>
<comment type="interaction">
    <interactant intactId="EBI-2340269">
        <id>Q13064</id>
    </interactant>
    <interactant intactId="EBI-740773">
        <id>Q96IZ5</id>
        <label>RBM41</label>
    </interactant>
    <organismsDiffer>false</organismsDiffer>
    <experiments>3</experiments>
</comment>
<comment type="interaction">
    <interactant intactId="EBI-2340269">
        <id>Q13064</id>
    </interactant>
    <interactant intactId="EBI-11987469">
        <id>Q6ZRY4</id>
        <label>RBPMS2</label>
    </interactant>
    <organismsDiffer>false</organismsDiffer>
    <experiments>3</experiments>
</comment>
<comment type="interaction">
    <interactant intactId="EBI-2340269">
        <id>Q13064</id>
    </interactant>
    <interactant intactId="EBI-10265323">
        <id>Q8N443</id>
        <label>RIBC1</label>
    </interactant>
    <organismsDiffer>false</organismsDiffer>
    <experiments>3</experiments>
</comment>
<comment type="interaction">
    <interactant intactId="EBI-2340269">
        <id>Q13064</id>
    </interactant>
    <interactant intactId="EBI-12821217">
        <id>Q2I0M5</id>
        <label>RSPO4</label>
    </interactant>
    <organismsDiffer>false</organismsDiffer>
    <experiments>3</experiments>
</comment>
<comment type="interaction">
    <interactant intactId="EBI-2340269">
        <id>Q13064</id>
    </interactant>
    <interactant intactId="EBI-10217913">
        <id>Q14D33</id>
        <label>RTP5</label>
    </interactant>
    <organismsDiffer>false</organismsDiffer>
    <experiments>5</experiments>
</comment>
<comment type="interaction">
    <interactant intactId="EBI-2340269">
        <id>Q13064</id>
    </interactant>
    <interactant intactId="EBI-748391">
        <id>Q9BWG6</id>
        <label>SCNM1</label>
    </interactant>
    <organismsDiffer>false</organismsDiffer>
    <experiments>8</experiments>
</comment>
<comment type="interaction">
    <interactant intactId="EBI-2340269">
        <id>Q13064</id>
    </interactant>
    <interactant intactId="EBI-744603">
        <id>Q15637</id>
        <label>SF1</label>
    </interactant>
    <organismsDiffer>false</organismsDiffer>
    <experiments>3</experiments>
</comment>
<comment type="interaction">
    <interactant intactId="EBI-2340269">
        <id>Q13064</id>
    </interactant>
    <interactant intactId="EBI-476295">
        <id>P31947</id>
        <label>SFN</label>
    </interactant>
    <organismsDiffer>false</organismsDiffer>
    <experiments>3</experiments>
</comment>
<comment type="interaction">
    <interactant intactId="EBI-2340269">
        <id>Q13064</id>
    </interactant>
    <interactant intactId="EBI-355293">
        <id>P03973</id>
        <label>SLPI</label>
    </interactant>
    <organismsDiffer>false</organismsDiffer>
    <experiments>3</experiments>
</comment>
<comment type="interaction">
    <interactant intactId="EBI-2340269">
        <id>Q13064</id>
    </interactant>
    <interactant intactId="EBI-358489">
        <id>Q96GM5</id>
        <label>SMARCD1</label>
    </interactant>
    <organismsDiffer>false</organismsDiffer>
    <experiments>3</experiments>
</comment>
<comment type="interaction">
    <interactant intactId="EBI-2340269">
        <id>Q13064</id>
    </interactant>
    <interactant intactId="EBI-347919">
        <id>Q9H7B4</id>
        <label>SMYD3</label>
    </interactant>
    <organismsDiffer>false</organismsDiffer>
    <experiments>3</experiments>
</comment>
<comment type="interaction">
    <interactant intactId="EBI-2340269">
        <id>Q13064</id>
    </interactant>
    <interactant intactId="EBI-766589">
        <id>P09234</id>
        <label>SNRPC</label>
    </interactant>
    <organismsDiffer>false</organismsDiffer>
    <experiments>3</experiments>
</comment>
<comment type="interaction">
    <interactant intactId="EBI-2340269">
        <id>Q13064</id>
    </interactant>
    <interactant intactId="EBI-741237">
        <id>O60504</id>
        <label>SORBS3</label>
    </interactant>
    <organismsDiffer>false</organismsDiffer>
    <experiments>3</experiments>
</comment>
<comment type="interaction">
    <interactant intactId="EBI-2340269">
        <id>Q13064</id>
    </interactant>
    <interactant intactId="EBI-8635958">
        <id>Q6RVD6</id>
        <label>SPATA8</label>
    </interactant>
    <organismsDiffer>false</organismsDiffer>
    <experiments>3</experiments>
</comment>
<comment type="interaction">
    <interactant intactId="EBI-2340269">
        <id>Q13064</id>
    </interactant>
    <interactant intactId="EBI-12831628">
        <id>Q8WW14-2</id>
        <label>SPMIP5</label>
    </interactant>
    <organismsDiffer>false</organismsDiffer>
    <experiments>3</experiments>
</comment>
<comment type="interaction">
    <interactant intactId="EBI-2340269">
        <id>Q13064</id>
    </interactant>
    <interactant intactId="EBI-12843506">
        <id>Q8IWL8</id>
        <label>STH</label>
    </interactant>
    <organismsDiffer>false</organismsDiffer>
    <experiments>3</experiments>
</comment>
<comment type="interaction">
    <interactant intactId="EBI-2340269">
        <id>Q13064</id>
    </interactant>
    <interactant intactId="EBI-725557">
        <id>Q9NZ72</id>
        <label>STMN3</label>
    </interactant>
    <organismsDiffer>false</organismsDiffer>
    <experiments>3</experiments>
</comment>
<comment type="interaction">
    <interactant intactId="EBI-2340269">
        <id>Q13064</id>
    </interactant>
    <interactant intactId="EBI-746930">
        <id>Q9H668</id>
        <label>STN1</label>
    </interactant>
    <organismsDiffer>false</organismsDiffer>
    <experiments>3</experiments>
</comment>
<comment type="interaction">
    <interactant intactId="EBI-2340269">
        <id>Q13064</id>
    </interactant>
    <interactant intactId="EBI-2682386">
        <id>Q96PV0</id>
        <label>SYNGAP1</label>
    </interactant>
    <organismsDiffer>false</organismsDiffer>
    <experiments>3</experiments>
</comment>
<comment type="interaction">
    <interactant intactId="EBI-2340269">
        <id>Q13064</id>
    </interactant>
    <interactant intactId="EBI-742268">
        <id>O75478</id>
        <label>TADA2A</label>
    </interactant>
    <organismsDiffer>false</organismsDiffer>
    <experiments>3</experiments>
</comment>
<comment type="interaction">
    <interactant intactId="EBI-2340269">
        <id>Q13064</id>
    </interactant>
    <interactant intactId="EBI-372899">
        <id>Q13148</id>
        <label>TARDBP</label>
    </interactant>
    <organismsDiffer>false</organismsDiffer>
    <experiments>3</experiments>
</comment>
<comment type="interaction">
    <interactant intactId="EBI-2340269">
        <id>Q13064</id>
    </interactant>
    <interactant intactId="EBI-745958">
        <id>Q5VWN6</id>
        <label>TASOR2</label>
    </interactant>
    <organismsDiffer>false</organismsDiffer>
    <experiments>3</experiments>
</comment>
<comment type="interaction">
    <interactant intactId="EBI-2340269">
        <id>Q13064</id>
    </interactant>
    <interactant intactId="EBI-710310">
        <id>Q15560</id>
        <label>TCEA2</label>
    </interactant>
    <organismsDiffer>false</organismsDiffer>
    <experiments>3</experiments>
</comment>
<comment type="interaction">
    <interactant intactId="EBI-2340269">
        <id>Q13064</id>
    </interactant>
    <interactant intactId="EBI-740781">
        <id>Q9BT92</id>
        <label>TCHP</label>
    </interactant>
    <organismsDiffer>false</organismsDiffer>
    <experiments>9</experiments>
</comment>
<comment type="interaction">
    <interactant intactId="EBI-2340269">
        <id>Q13064</id>
    </interactant>
    <interactant intactId="EBI-727338">
        <id>O95988</id>
        <label>TCL1B</label>
    </interactant>
    <organismsDiffer>false</organismsDiffer>
    <experiments>6</experiments>
</comment>
<comment type="interaction">
    <interactant intactId="EBI-2340269">
        <id>Q13064</id>
    </interactant>
    <interactant intactId="EBI-752030">
        <id>Q96A09</id>
        <label>TENT5B</label>
    </interactant>
    <organismsDiffer>false</organismsDiffer>
    <experiments>3</experiments>
</comment>
<comment type="interaction">
    <interactant intactId="EBI-2340269">
        <id>Q13064</id>
    </interactant>
    <interactant intactId="EBI-347351">
        <id>P05549</id>
        <label>TFAP2A</label>
    </interactant>
    <organismsDiffer>false</organismsDiffer>
    <experiments>3</experiments>
</comment>
<comment type="interaction">
    <interactant intactId="EBI-2340269">
        <id>Q13064</id>
    </interactant>
    <interactant intactId="EBI-1105213">
        <id>Q9UBB9</id>
        <label>TFIP11</label>
    </interactant>
    <organismsDiffer>false</organismsDiffer>
    <experiments>3</experiments>
</comment>
<comment type="interaction">
    <interactant intactId="EBI-2340269">
        <id>Q13064</id>
    </interactant>
    <interactant intactId="EBI-11741437">
        <id>Q08117-2</id>
        <label>TLE5</label>
    </interactant>
    <organismsDiffer>false</organismsDiffer>
    <experiments>5</experiments>
</comment>
<comment type="interaction">
    <interactant intactId="EBI-2340269">
        <id>Q13064</id>
    </interactant>
    <interactant intactId="EBI-14115717">
        <id>Q8N7U7-2</id>
        <label>TPRX1</label>
    </interactant>
    <organismsDiffer>false</organismsDiffer>
    <experiments>3</experiments>
</comment>
<comment type="interaction">
    <interactant intactId="EBI-2340269">
        <id>Q13064</id>
    </interactant>
    <interactant intactId="EBI-355744">
        <id>Q12933</id>
        <label>TRAF2</label>
    </interactant>
    <organismsDiffer>false</organismsDiffer>
    <experiments>3</experiments>
</comment>
<comment type="interaction">
    <interactant intactId="EBI-2340269">
        <id>Q13064</id>
    </interactant>
    <interactant intactId="EBI-10241197">
        <id>Q3SY00</id>
        <label>TSGA10IP</label>
    </interactant>
    <organismsDiffer>false</organismsDiffer>
    <experiments>3</experiments>
</comment>
<comment type="interaction">
    <interactant intactId="EBI-2340269">
        <id>Q13064</id>
    </interactant>
    <interactant intactId="EBI-8652667">
        <id>O14817</id>
        <label>TSPAN4</label>
    </interactant>
    <organismsDiffer>false</organismsDiffer>
    <experiments>3</experiments>
</comment>
<comment type="interaction">
    <interactant intactId="EBI-2340269">
        <id>Q13064</id>
    </interactant>
    <interactant intactId="EBI-9090990">
        <id>Q5W5X9-3</id>
        <label>TTC23</label>
    </interactant>
    <organismsDiffer>false</organismsDiffer>
    <experiments>3</experiments>
</comment>
<comment type="interaction">
    <interactant intactId="EBI-2340269">
        <id>Q13064</id>
    </interactant>
    <interactant intactId="EBI-749812">
        <id>Q6PKC3</id>
        <label>TXNDC11</label>
    </interactant>
    <organismsDiffer>false</organismsDiffer>
    <experiments>3</experiments>
</comment>
<comment type="interaction">
    <interactant intactId="EBI-2340269">
        <id>Q13064</id>
    </interactant>
    <interactant intactId="EBI-743540">
        <id>P51668</id>
        <label>UBE2D1</label>
    </interactant>
    <organismsDiffer>false</organismsDiffer>
    <experiments>4</experiments>
</comment>
<comment type="interaction">
    <interactant intactId="EBI-2340269">
        <id>Q13064</id>
    </interactant>
    <interactant intactId="EBI-473850">
        <id>P61086</id>
        <label>UBE2K</label>
    </interactant>
    <organismsDiffer>false</organismsDiffer>
    <experiments>3</experiments>
</comment>
<comment type="interaction">
    <interactant intactId="EBI-2340269">
        <id>Q13064</id>
    </interactant>
    <interactant intactId="EBI-1054584">
        <id>Q9BRT2</id>
        <label>UQCC2</label>
    </interactant>
    <organismsDiffer>false</organismsDiffer>
    <experiments>3</experiments>
</comment>
<comment type="interaction">
    <interactant intactId="EBI-2340269">
        <id>Q13064</id>
    </interactant>
    <interactant intactId="EBI-739895">
        <id>Q8N6Y0</id>
        <label>USHBP1</label>
    </interactant>
    <organismsDiffer>false</organismsDiffer>
    <experiments>3</experiments>
</comment>
<comment type="interaction">
    <interactant intactId="EBI-2340269">
        <id>Q13064</id>
    </interactant>
    <interactant intactId="EBI-9031083">
        <id>Q9Y2B5</id>
        <label>VPS9D1</label>
    </interactant>
    <organismsDiffer>false</organismsDiffer>
    <experiments>3</experiments>
</comment>
<comment type="interaction">
    <interactant intactId="EBI-2340269">
        <id>Q13064</id>
    </interactant>
    <interactant intactId="EBI-12032042">
        <id>Q64LD2-2</id>
        <label>WDR25</label>
    </interactant>
    <organismsDiffer>false</organismsDiffer>
    <experiments>3</experiments>
</comment>
<comment type="interaction">
    <interactant intactId="EBI-2340269">
        <id>Q13064</id>
    </interactant>
    <interactant intactId="EBI-12040603">
        <id>Q9NZC7-5</id>
        <label>WWOX</label>
    </interactant>
    <organismsDiffer>false</organismsDiffer>
    <experiments>3</experiments>
</comment>
<comment type="interaction">
    <interactant intactId="EBI-2340269">
        <id>Q13064</id>
    </interactant>
    <interactant intactId="EBI-12287587">
        <id>B2RXF5</id>
        <label>ZBTB42</label>
    </interactant>
    <organismsDiffer>false</organismsDiffer>
    <experiments>3</experiments>
</comment>
<comment type="interaction">
    <interactant intactId="EBI-2340269">
        <id>Q13064</id>
    </interactant>
    <interactant intactId="EBI-6448783">
        <id>G3V1X1</id>
        <label>ZFC3H1</label>
    </interactant>
    <organismsDiffer>false</organismsDiffer>
    <experiments>3</experiments>
</comment>
<comment type="interaction">
    <interactant intactId="EBI-2340269">
        <id>Q13064</id>
    </interactant>
    <interactant intactId="EBI-12879708">
        <id>Q9NU63-3</id>
        <label>ZFP57</label>
    </interactant>
    <organismsDiffer>false</organismsDiffer>
    <experiments>3</experiments>
</comment>
<comment type="interaction">
    <interactant intactId="EBI-2340269">
        <id>Q13064</id>
    </interactant>
    <interactant intactId="EBI-11962760">
        <id>Q9NZV7</id>
        <label>ZIM2</label>
    </interactant>
    <organismsDiffer>false</organismsDiffer>
    <experiments>3</experiments>
</comment>
<comment type="interaction">
    <interactant intactId="EBI-2340269">
        <id>Q13064</id>
    </interactant>
    <interactant intactId="EBI-744257">
        <id>Q96IQ9</id>
        <label>ZNF414</label>
    </interactant>
    <organismsDiffer>false</organismsDiffer>
    <experiments>3</experiments>
</comment>
<comment type="interaction">
    <interactant intactId="EBI-2340269">
        <id>Q13064</id>
    </interactant>
    <interactant intactId="EBI-6427977">
        <id>Q96SQ5</id>
        <label>ZNF587</label>
    </interactant>
    <organismsDiffer>false</organismsDiffer>
    <experiments>3</experiments>
</comment>
<comment type="interaction">
    <interactant intactId="EBI-2340269">
        <id>Q13064</id>
    </interactant>
    <interactant intactId="EBI-16429014">
        <id>A0A0S2Z5X4</id>
        <label>ZNF688</label>
    </interactant>
    <organismsDiffer>false</organismsDiffer>
    <experiments>3</experiments>
</comment>
<comment type="interaction">
    <interactant intactId="EBI-2340269">
        <id>Q13064</id>
    </interactant>
    <interactant intactId="EBI-4395732">
        <id>P0C7X2</id>
        <label>ZNF688</label>
    </interactant>
    <organismsDiffer>false</organismsDiffer>
    <experiments>3</experiments>
</comment>
<comment type="interaction">
    <interactant intactId="EBI-2340269">
        <id>Q13064</id>
    </interactant>
    <interactant intactId="EBI-5667516">
        <id>Q9Y2P0</id>
        <label>ZNF835</label>
    </interactant>
    <organismsDiffer>false</organismsDiffer>
    <experiments>3</experiments>
</comment>
<comment type="interaction">
    <interactant intactId="EBI-2340269">
        <id>Q13064</id>
    </interactant>
    <interactant intactId="EBI-25474079">
        <id>PRO_0000037311</id>
        <label>rep</label>
        <dbReference type="UniProtKB" id="P0C6X7"/>
    </interactant>
    <organismsDiffer>true</organismsDiffer>
    <experiments>2</experiments>
</comment>
<comment type="interaction">
    <interactant intactId="EBI-2340269">
        <id>Q13064</id>
    </interactant>
    <interactant intactId="EBI-25492388">
        <id>PRO_0000449621</id>
        <label>rep</label>
        <dbReference type="UniProtKB" id="P0DTD1"/>
    </interactant>
    <organismsDiffer>true</organismsDiffer>
    <experiments>3</experiments>
</comment>
<comment type="subcellular location">
    <subcellularLocation>
        <location evidence="13">Nucleus</location>
    </subcellularLocation>
</comment>
<comment type="tissue specificity">
    <text evidence="5">Ubiquitous.</text>
</comment>
<comment type="disease" evidence="8 9 10 11 12 13 14">
    <disease id="DI-03824">
        <name>Precocious puberty, central 2</name>
        <acronym>CPPB2</acronym>
        <description>A condition defined as the development of secondary sexual characteristics in boys and girls at a chronological age that is 2.5 standard deviations below the mean age at onset of puberty in the population. Central precocious puberty results from premature activation of the hypothalamic-pituitary-gonadal axis.</description>
        <dbReference type="MIM" id="615346"/>
    </disease>
    <text>The disease is caused by variants affecting the gene represented in this entry.</text>
</comment>
<comment type="miscellaneous">
    <text>Imprinted, expressed from the paternal chromosome only. A deficiency of MKRN3 is not sufficient to cause Prader-Willi syndrome (PWS).</text>
</comment>
<sequence length="507" mass="55645">MEEPAAPSEAHEAAGAQAGAEAAREGVSGPDLPVCEPSGESAAPDSALPHAARGWAPFPVAPVPAHLRRGGLRPAPASGGGAWPSPLPSRSSGIWTKQIICRYYIHGQCKEGENCRYSHDLSGRKMATEGGVSPPGASAGGGPSTAAHIEPPTQEVAEAPPAASSLSLPVIGSAAERGFFEAERDNADRGAAGGAGVESWADAIEFVPGQPYRGRWVASAPEAPLQSSETERKQMAVGSGLRFCYYASRGVCFRGESCMYLHGDICDMCGLQTLHPMDAAQREEHMRACIEAHEKDMELSFAVQRGMDKVCGICMEVVYEKANPNDRRFGILSNCNHSFCIRCIRRWRSARQFENRIVKSCPQCRVTSELVIPSEFWVEEEEEKQKLIQQYKEAMSNKACRYFAEGRGNCPFGDTCFYKHEYPEGWGDEPPGPGGGSFSAYWHQLVEPVRMGEGNMLYKSIKKELVVLRLASLLFKRFLSLRDELPFSEDQWDLLHYELEEYFNLIL</sequence>
<protein>
    <recommendedName>
        <fullName>E3 ubiquitin-protein ligase makorin-3</fullName>
        <ecNumber evidence="13 14">2.3.2.27</ecNumber>
    </recommendedName>
    <alternativeName>
        <fullName>RING finger protein 63</fullName>
    </alternativeName>
    <alternativeName>
        <fullName evidence="15">RING-type E3 ubiquitin transferase makorin-3</fullName>
    </alternativeName>
    <alternativeName>
        <fullName>Zinc finger protein 127</fullName>
    </alternativeName>
</protein>
<accession>Q13064</accession>
<keyword id="KW-0225">Disease variant</keyword>
<keyword id="KW-0479">Metal-binding</keyword>
<keyword id="KW-0539">Nucleus</keyword>
<keyword id="KW-1267">Proteomics identification</keyword>
<keyword id="KW-1185">Reference proteome</keyword>
<keyword id="KW-0677">Repeat</keyword>
<keyword id="KW-0808">Transferase</keyword>
<keyword id="KW-0833">Ubl conjugation pathway</keyword>
<keyword id="KW-0862">Zinc</keyword>
<keyword id="KW-0863">Zinc-finger</keyword>
<evidence type="ECO:0000250" key="1">
    <source>
        <dbReference type="UniProtKB" id="Q60764"/>
    </source>
</evidence>
<evidence type="ECO:0000255" key="2">
    <source>
        <dbReference type="PROSITE-ProRule" id="PRU00175"/>
    </source>
</evidence>
<evidence type="ECO:0000255" key="3">
    <source>
        <dbReference type="PROSITE-ProRule" id="PRU00723"/>
    </source>
</evidence>
<evidence type="ECO:0000256" key="4">
    <source>
        <dbReference type="SAM" id="MobiDB-lite"/>
    </source>
</evidence>
<evidence type="ECO:0000269" key="5">
    <source>
    </source>
</evidence>
<evidence type="ECO:0000269" key="6">
    <source>
    </source>
</evidence>
<evidence type="ECO:0000269" key="7">
    <source>
    </source>
</evidence>
<evidence type="ECO:0000269" key="8">
    <source>
    </source>
</evidence>
<evidence type="ECO:0000269" key="9">
    <source>
    </source>
</evidence>
<evidence type="ECO:0000269" key="10">
    <source>
    </source>
</evidence>
<evidence type="ECO:0000269" key="11">
    <source>
    </source>
</evidence>
<evidence type="ECO:0000269" key="12">
    <source>
    </source>
</evidence>
<evidence type="ECO:0000269" key="13">
    <source>
    </source>
</evidence>
<evidence type="ECO:0000269" key="14">
    <source>
    </source>
</evidence>
<evidence type="ECO:0000305" key="15"/>
<reference key="1">
    <citation type="journal article" date="1999" name="Hum. Mol. Genet.">
        <title>A novel imprinted gene, encoding a RING zinc-finger protein, and overlapping antisense transcript in the Prader-Willi syndrome critical region.</title>
        <authorList>
            <person name="Jong M.T.C."/>
            <person name="Gray T.A."/>
            <person name="Ji Y."/>
            <person name="Glenn C.C."/>
            <person name="Saitoh S."/>
            <person name="Driscoll D.J."/>
            <person name="Nicholls R.D."/>
        </authorList>
    </citation>
    <scope>NUCLEOTIDE SEQUENCE [GENOMIC DNA]</scope>
    <scope>TISSUE SPECIFICITY</scope>
</reference>
<reference key="2">
    <citation type="journal article" date="2004" name="Genome Res.">
        <title>The status, quality, and expansion of the NIH full-length cDNA project: the Mammalian Gene Collection (MGC).</title>
        <authorList>
            <consortium name="The MGC Project Team"/>
        </authorList>
    </citation>
    <scope>NUCLEOTIDE SEQUENCE [LARGE SCALE MRNA]</scope>
    <source>
        <tissue>Muscle</tissue>
    </source>
</reference>
<reference key="3">
    <citation type="journal article" date="2009" name="Eur. J. Hum. Genet.">
        <title>A paternal deletion of MKRN3, MAGEL2 and NDN does not result in Prader-Willi syndrome.</title>
        <authorList>
            <person name="Kanber D."/>
            <person name="Giltay J."/>
            <person name="Wieczorek D."/>
            <person name="Zogel C."/>
            <person name="Hochstenbach R."/>
            <person name="Caliebe A."/>
            <person name="Kuechler A."/>
            <person name="Horsthemke B."/>
            <person name="Buiting K."/>
        </authorList>
    </citation>
    <scope>FUNCTION</scope>
</reference>
<reference key="4">
    <citation type="journal article" date="2021" name="Nucleic Acids Res.">
        <title>MKRN3-mediated ubiquitination of Poly(A)-binding proteins modulates the stability and translation of GNRH1 mRNA in mammalian puberty.</title>
        <authorList>
            <person name="Li C."/>
            <person name="Han T."/>
            <person name="Li Q."/>
            <person name="Zhang M."/>
            <person name="Guo R."/>
            <person name="Yang Y."/>
            <person name="Lu W."/>
            <person name="Li Z."/>
            <person name="Peng C."/>
            <person name="Wu P."/>
            <person name="Tian X."/>
            <person name="Wang Q."/>
            <person name="Wang Y."/>
            <person name="Zhou V."/>
            <person name="Han Z."/>
            <person name="Li H."/>
            <person name="Wang F."/>
            <person name="Hu R."/>
        </authorList>
    </citation>
    <scope>FUNCTION</scope>
</reference>
<reference key="5">
    <citation type="journal article" date="2006" name="Science">
        <title>The consensus coding sequences of human breast and colorectal cancers.</title>
        <authorList>
            <person name="Sjoeblom T."/>
            <person name="Jones S."/>
            <person name="Wood L.D."/>
            <person name="Parsons D.W."/>
            <person name="Lin J."/>
            <person name="Barber T.D."/>
            <person name="Mandelker D."/>
            <person name="Leary R.J."/>
            <person name="Ptak J."/>
            <person name="Silliman N."/>
            <person name="Szabo S."/>
            <person name="Buckhaults P."/>
            <person name="Farrell C."/>
            <person name="Meeh P."/>
            <person name="Markowitz S.D."/>
            <person name="Willis J."/>
            <person name="Dawson D."/>
            <person name="Willson J.K.V."/>
            <person name="Gazdar A.F."/>
            <person name="Hartigan J."/>
            <person name="Wu L."/>
            <person name="Liu C."/>
            <person name="Parmigiani G."/>
            <person name="Park B.H."/>
            <person name="Bachman K.E."/>
            <person name="Papadopoulos N."/>
            <person name="Vogelstein B."/>
            <person name="Kinzler K.W."/>
            <person name="Velculescu V.E."/>
        </authorList>
    </citation>
    <scope>VARIANTS [LARGE SCALE ANALYSIS] MET-145 AND THR-239</scope>
</reference>
<reference key="6">
    <citation type="journal article" date="2013" name="N. Engl. J. Med.">
        <title>Central precocious puberty caused by mutations in the imprinted gene MKRN3.</title>
        <authorList>
            <person name="Abreu A.P."/>
            <person name="Dauber A."/>
            <person name="Macedo D.B."/>
            <person name="Noel S.D."/>
            <person name="Brito V.N."/>
            <person name="Gill J.C."/>
            <person name="Cukier P."/>
            <person name="Thompson I.R."/>
            <person name="Navarro V.M."/>
            <person name="Gagliardi P.C."/>
            <person name="Rodrigues T."/>
            <person name="Kochi C."/>
            <person name="Longui C.A."/>
            <person name="Beckers D."/>
            <person name="de Zegher F."/>
            <person name="Montenegro L.R."/>
            <person name="Mendonca B.B."/>
            <person name="Carroll R.S."/>
            <person name="Hirschhorn J.N."/>
            <person name="Latronico A.C."/>
            <person name="Kaiser U.B."/>
        </authorList>
    </citation>
    <scope>VARIANT CPPB2 SER-365</scope>
</reference>
<reference key="7">
    <citation type="journal article" date="2014" name="Horm. Res. Paediatr.">
        <title>MKRN3 mutations in familial central precocious puberty.</title>
        <authorList>
            <person name="Schreiner F."/>
            <person name="Gohlke B."/>
            <person name="Hamm M."/>
            <person name="Korsch E."/>
            <person name="Woelfle J."/>
        </authorList>
    </citation>
    <scope>INVOLVEMENT IN CPPB2</scope>
</reference>
<reference key="8">
    <citation type="journal article" date="2014" name="Hum. Reprod.">
        <title>A novel MKRN3 missense mutation causing familial precocious puberty.</title>
        <authorList>
            <person name="de Vries L."/>
            <person name="Gat-Yablonski G."/>
            <person name="Dror N."/>
            <person name="Singer A."/>
            <person name="Phillip M."/>
        </authorList>
    </citation>
    <scope>VARIANT CPPB2 GLN-420</scope>
</reference>
<reference key="9">
    <citation type="journal article" date="2014" name="J. Clin. Endocrinol. Metab.">
        <title>Central precocious puberty in a girl and early puberty in her brother caused by a novel mutation in the MKRN3 gene.</title>
        <authorList>
            <person name="Settas N."/>
            <person name="Dacou-Voutetakis C."/>
            <person name="Karantza M."/>
            <person name="Kanaka-Gantenbein C."/>
            <person name="Chrousos G.P."/>
            <person name="Voutetakis A."/>
        </authorList>
    </citation>
    <scope>VARIANT CPPB2 GLY-340</scope>
</reference>
<reference key="10">
    <citation type="journal article" date="2014" name="J. Clin. Endocrinol. Metab.">
        <title>Central precocious puberty that appears to be sporadic caused by paternally inherited mutations in the imprinted gene makorin ring finger 3.</title>
        <authorList>
            <person name="Macedo D.B."/>
            <person name="Abreu A.P."/>
            <person name="Reis A.C."/>
            <person name="Montenegro L.R."/>
            <person name="Dauber A."/>
            <person name="Beneduzzi D."/>
            <person name="Cukier P."/>
            <person name="Silveira L.F."/>
            <person name="Teles M.G."/>
            <person name="Carroll R.S."/>
            <person name="Junior G.G."/>
            <person name="Filho G.G."/>
            <person name="Gucev Z."/>
            <person name="Arnhold I.J."/>
            <person name="de Castro M."/>
            <person name="Moreira A.C."/>
            <person name="Martinelli C.E. Jr."/>
            <person name="Hirschhorn J.N."/>
            <person name="Mendonca B.B."/>
            <person name="Brito V.N."/>
            <person name="Antonini S.R."/>
            <person name="Kaiser U.B."/>
            <person name="Latronico A.C."/>
        </authorList>
    </citation>
    <scope>VARIANT CPPB2 ILE-417</scope>
</reference>
<reference key="11">
    <citation type="journal article" date="2020" name="Natl Sci Rev">
        <title>MKRN3 regulates the epigenetic switch of mammalian puberty via ubiquitination of MBD3.</title>
        <authorList>
            <person name="Li C."/>
            <person name="Lu W."/>
            <person name="Yang L."/>
            <person name="Li Z."/>
            <person name="Zhou X."/>
            <person name="Guo R."/>
            <person name="Wang J."/>
            <person name="Wu Z."/>
            <person name="Dong Z."/>
            <person name="Ning G."/>
            <person name="Shi Y."/>
            <person name="Gu Y."/>
            <person name="Chen P."/>
            <person name="Hao Z."/>
            <person name="Han T."/>
            <person name="Yang M."/>
            <person name="Wang W."/>
            <person name="Huang X."/>
            <person name="Li Y."/>
            <person name="Gao S."/>
            <person name="Hu R."/>
        </authorList>
    </citation>
    <scope>VARIANT CPPB2 GLY-340</scope>
    <scope>CHARACTERIZATION OF VARIANT CPPB2 GLY-340</scope>
    <scope>FUNCTION</scope>
    <scope>CATALYTIC ACTIVITY</scope>
    <scope>SUBCELLULAR LOCATION</scope>
</reference>
<reference key="12">
    <citation type="journal article" date="2024" name="J. Biol. Chem.">
        <title>Ubiquitin-mediated regulation of APE2 protein abundance.</title>
        <authorList>
            <person name="McMahon A."/>
            <person name="Zhao J."/>
            <person name="Yan S."/>
        </authorList>
    </citation>
    <scope>VARIANT CPPB2 GLY-340</scope>
    <scope>CHARACTERIZATION OF VARIANT CPPB2 GLY-340</scope>
    <scope>FUNCTION</scope>
    <scope>CATALYTIC ACTIVITY</scope>
</reference>
<proteinExistence type="evidence at protein level"/>
<gene>
    <name type="primary">MKRN3</name>
    <name type="synonym">D15S9</name>
    <name type="synonym">RNF63</name>
    <name type="synonym">ZNF127</name>
</gene>
<feature type="chain" id="PRO_0000055959" description="E3 ubiquitin-protein ligase makorin-3">
    <location>
        <begin position="1"/>
        <end position="507"/>
    </location>
</feature>
<feature type="zinc finger region" description="C3H1-type 1" evidence="3">
    <location>
        <begin position="95"/>
        <end position="122"/>
    </location>
</feature>
<feature type="zinc finger region" description="C3H1-type 2" evidence="3">
    <location>
        <begin position="238"/>
        <end position="265"/>
    </location>
</feature>
<feature type="zinc finger region" description="RING-type" evidence="2">
    <location>
        <begin position="311"/>
        <end position="365"/>
    </location>
</feature>
<feature type="zinc finger region" description="C3H1-type 3" evidence="3">
    <location>
        <begin position="394"/>
        <end position="423"/>
    </location>
</feature>
<feature type="region of interest" description="Disordered" evidence="4">
    <location>
        <begin position="1"/>
        <end position="48"/>
    </location>
</feature>
<feature type="region of interest" description="Disordered" evidence="4">
    <location>
        <begin position="69"/>
        <end position="89"/>
    </location>
</feature>
<feature type="region of interest" description="Disordered" evidence="4">
    <location>
        <begin position="126"/>
        <end position="149"/>
    </location>
</feature>
<feature type="region of interest" description="Makorin-type Cys-His">
    <location>
        <begin position="266"/>
        <end position="293"/>
    </location>
</feature>
<feature type="compositionally biased region" description="Low complexity" evidence="4">
    <location>
        <begin position="1"/>
        <end position="21"/>
    </location>
</feature>
<feature type="sequence variant" id="VAR_035955" description="In a colorectal cancer sample; somatic mutation; dbSNP:rs371642799." evidence="6">
    <original>T</original>
    <variation>M</variation>
    <location>
        <position position="145"/>
    </location>
</feature>
<feature type="sequence variant" id="VAR_035956" description="In a colorectal cancer sample; somatic mutation." evidence="6">
    <original>S</original>
    <variation>T</variation>
    <location>
        <position position="239"/>
    </location>
</feature>
<feature type="sequence variant" id="VAR_073023" description="In CPPB2; uncertain significance; functionally impaired in vitro." evidence="9 13 14">
    <original>C</original>
    <variation>G</variation>
    <location>
        <position position="340"/>
    </location>
</feature>
<feature type="sequence variant" id="VAR_070103" description="In CPPB2; dbSNP:rs879255240." evidence="8">
    <original>R</original>
    <variation>S</variation>
    <location>
        <position position="365"/>
    </location>
</feature>
<feature type="sequence variant" id="VAR_073024" description="In CPPB2." evidence="10">
    <original>F</original>
    <variation>I</variation>
    <location>
        <position position="417"/>
    </location>
</feature>
<feature type="sequence variant" id="VAR_073025" description="In CPPB2; dbSNP:rs755791221." evidence="12">
    <original>H</original>
    <variation>Q</variation>
    <location>
        <position position="420"/>
    </location>
</feature>
<organism>
    <name type="scientific">Homo sapiens</name>
    <name type="common">Human</name>
    <dbReference type="NCBI Taxonomy" id="9606"/>
    <lineage>
        <taxon>Eukaryota</taxon>
        <taxon>Metazoa</taxon>
        <taxon>Chordata</taxon>
        <taxon>Craniata</taxon>
        <taxon>Vertebrata</taxon>
        <taxon>Euteleostomi</taxon>
        <taxon>Mammalia</taxon>
        <taxon>Eutheria</taxon>
        <taxon>Euarchontoglires</taxon>
        <taxon>Primates</taxon>
        <taxon>Haplorrhini</taxon>
        <taxon>Catarrhini</taxon>
        <taxon>Hominidae</taxon>
        <taxon>Homo</taxon>
    </lineage>
</organism>